<evidence type="ECO:0000255" key="1">
    <source>
        <dbReference type="HAMAP-Rule" id="MF_03158"/>
    </source>
</evidence>
<evidence type="ECO:0000256" key="2">
    <source>
        <dbReference type="SAM" id="MobiDB-lite"/>
    </source>
</evidence>
<evidence type="ECO:0000269" key="3">
    <source>
    </source>
</evidence>
<organism>
    <name type="scientific">Zea mays</name>
    <name type="common">Maize</name>
    <dbReference type="NCBI Taxonomy" id="4577"/>
    <lineage>
        <taxon>Eukaryota</taxon>
        <taxon>Viridiplantae</taxon>
        <taxon>Streptophyta</taxon>
        <taxon>Embryophyta</taxon>
        <taxon>Tracheophyta</taxon>
        <taxon>Spermatophyta</taxon>
        <taxon>Magnoliopsida</taxon>
        <taxon>Liliopsida</taxon>
        <taxon>Poales</taxon>
        <taxon>Poaceae</taxon>
        <taxon>PACMAD clade</taxon>
        <taxon>Panicoideae</taxon>
        <taxon>Andropogonodae</taxon>
        <taxon>Andropogoneae</taxon>
        <taxon>Tripsacinae</taxon>
        <taxon>Zea</taxon>
    </lineage>
</organism>
<protein>
    <recommendedName>
        <fullName evidence="1">Thiamine thiazole synthase 2, chloroplastic</fullName>
        <ecNumber evidence="1">2.4.2.60</ecNumber>
    </recommendedName>
    <alternativeName>
        <fullName evidence="1">Thiazole biosynthetic enzyme 2</fullName>
    </alternativeName>
</protein>
<reference key="1">
    <citation type="journal article" date="1995" name="Plant Mol. Biol.">
        <title>Evidence for the thiamine biosynthetic pathway in higher-plant plastids and its developmental regulation.</title>
        <authorList>
            <person name="Belanger F.C."/>
            <person name="Leustek T."/>
            <person name="Chu B."/>
            <person name="Kriz A.L."/>
        </authorList>
    </citation>
    <scope>NUCLEOTIDE SEQUENCE [MRNA]</scope>
    <scope>FUNCTION</scope>
    <scope>SUBCELLULAR LOCATION</scope>
    <source>
        <tissue>Seedling</tissue>
    </source>
</reference>
<accession>Q41739</accession>
<keyword id="KW-0150">Chloroplast</keyword>
<keyword id="KW-0408">Iron</keyword>
<keyword id="KW-0479">Metal-binding</keyword>
<keyword id="KW-0520">NAD</keyword>
<keyword id="KW-0934">Plastid</keyword>
<keyword id="KW-1185">Reference proteome</keyword>
<keyword id="KW-0784">Thiamine biosynthesis</keyword>
<keyword id="KW-0808">Transferase</keyword>
<keyword id="KW-0809">Transit peptide</keyword>
<feature type="transit peptide" description="Chloroplast" evidence="1">
    <location>
        <begin position="1"/>
        <end position="44"/>
    </location>
</feature>
<feature type="chain" id="PRO_0000034063" description="Thiamine thiazole synthase 2, chloroplastic">
    <location>
        <begin position="45"/>
        <end position="354"/>
    </location>
</feature>
<feature type="region of interest" description="Disordered" evidence="2">
    <location>
        <begin position="17"/>
        <end position="49"/>
    </location>
</feature>
<feature type="compositionally biased region" description="Polar residues" evidence="2">
    <location>
        <begin position="20"/>
        <end position="32"/>
    </location>
</feature>
<feature type="binding site" evidence="1">
    <location>
        <position position="97"/>
    </location>
    <ligand>
        <name>substrate</name>
    </ligand>
</feature>
<feature type="binding site" evidence="1">
    <location>
        <begin position="117"/>
        <end position="118"/>
    </location>
    <ligand>
        <name>substrate</name>
    </ligand>
</feature>
<feature type="binding site" evidence="1">
    <location>
        <position position="125"/>
    </location>
    <ligand>
        <name>substrate</name>
    </ligand>
</feature>
<feature type="binding site" evidence="1">
    <location>
        <position position="190"/>
    </location>
    <ligand>
        <name>substrate</name>
    </ligand>
</feature>
<feature type="binding site" evidence="1">
    <location>
        <position position="221"/>
    </location>
    <ligand>
        <name>substrate</name>
    </ligand>
</feature>
<feature type="binding site" evidence="1">
    <location>
        <position position="236"/>
    </location>
    <ligand>
        <name>substrate</name>
    </ligand>
</feature>
<feature type="binding site" evidence="1">
    <location>
        <position position="288"/>
    </location>
    <ligand>
        <name>substrate</name>
    </ligand>
</feature>
<feature type="binding site" evidence="1">
    <location>
        <begin position="298"/>
        <end position="300"/>
    </location>
    <ligand>
        <name>substrate</name>
    </ligand>
</feature>
<feature type="modified residue" description="2,3-didehydroalanine (Cys)" evidence="1">
    <location>
        <position position="219"/>
    </location>
</feature>
<proteinExistence type="evidence at transcript level"/>
<sequence>MATTAASSLLKSSFAGSRLPSATRTTTPSSVAVATPRAGGGPIRASISSPNPPYDLTSFRFSPIKESIVSREMTRRYMTDMITHADTDVVIVGAGSAGLSCAYELSKDPTVSVAIVEQSVSPGGGAWLGGQLFSAMVVRRPAHLFLDELGVGYDEAEDYVVVKHAALFTSTVMSRLLARPNVKLFNAVAVEDLIVRRGRVGGVVTNWALVSMNHDTQSCMDPNVMEAKVVVSSCGHDGPFGATGVKRLQDIGMISAVPGMKALDMNAAEDEIVRLTREVVPGMIVTGMEVAEIDGAPRMGPTFGAMMISGQKAAHLALKALGRPNAVDGTIPEVSPALREEFVIASKDDEVVDA</sequence>
<name>THI42_MAIZE</name>
<dbReference type="EC" id="2.4.2.60" evidence="1"/>
<dbReference type="EMBL" id="U17351">
    <property type="protein sequence ID" value="AAA96739.1"/>
    <property type="molecule type" value="mRNA"/>
</dbReference>
<dbReference type="PIR" id="S61420">
    <property type="entry name" value="S61420"/>
</dbReference>
<dbReference type="SMR" id="Q41739"/>
<dbReference type="FunCoup" id="Q41739">
    <property type="interactions" value="1048"/>
</dbReference>
<dbReference type="STRING" id="4577.Q41739"/>
<dbReference type="PaxDb" id="4577-GRMZM2G074097_P01"/>
<dbReference type="MaizeGDB" id="128724"/>
<dbReference type="eggNOG" id="KOG2960">
    <property type="taxonomic scope" value="Eukaryota"/>
</dbReference>
<dbReference type="InParanoid" id="Q41739"/>
<dbReference type="Proteomes" id="UP000007305">
    <property type="component" value="Unplaced"/>
</dbReference>
<dbReference type="ExpressionAtlas" id="Q41739">
    <property type="expression patterns" value="baseline and differential"/>
</dbReference>
<dbReference type="GO" id="GO:0009570">
    <property type="term" value="C:chloroplast stroma"/>
    <property type="evidence" value="ECO:0007669"/>
    <property type="project" value="UniProtKB-UniRule"/>
</dbReference>
<dbReference type="GO" id="GO:0005829">
    <property type="term" value="C:cytosol"/>
    <property type="evidence" value="ECO:0007669"/>
    <property type="project" value="UniProtKB-UniRule"/>
</dbReference>
<dbReference type="GO" id="GO:0160205">
    <property type="term" value="F:cysteine-dependent adenosine diphosphate thiazole synthase activity"/>
    <property type="evidence" value="ECO:0007669"/>
    <property type="project" value="UniProtKB-EC"/>
</dbReference>
<dbReference type="GO" id="GO:0005506">
    <property type="term" value="F:iron ion binding"/>
    <property type="evidence" value="ECO:0000318"/>
    <property type="project" value="GO_Central"/>
</dbReference>
<dbReference type="GO" id="GO:0009228">
    <property type="term" value="P:thiamine biosynthetic process"/>
    <property type="evidence" value="ECO:0007669"/>
    <property type="project" value="UniProtKB-UniRule"/>
</dbReference>
<dbReference type="GO" id="GO:0052837">
    <property type="term" value="P:thiazole biosynthetic process"/>
    <property type="evidence" value="ECO:0000318"/>
    <property type="project" value="GO_Central"/>
</dbReference>
<dbReference type="FunFam" id="3.50.50.60:FF:000070">
    <property type="entry name" value="Thiamine thiazole synthase, chloroplastic"/>
    <property type="match status" value="1"/>
</dbReference>
<dbReference type="Gene3D" id="6.10.250.2840">
    <property type="match status" value="1"/>
</dbReference>
<dbReference type="Gene3D" id="3.50.50.60">
    <property type="entry name" value="FAD/NAD(P)-binding domain"/>
    <property type="match status" value="1"/>
</dbReference>
<dbReference type="HAMAP" id="MF_03158">
    <property type="entry name" value="THI4"/>
    <property type="match status" value="1"/>
</dbReference>
<dbReference type="InterPro" id="IPR036188">
    <property type="entry name" value="FAD/NAD-bd_sf"/>
</dbReference>
<dbReference type="InterPro" id="IPR027495">
    <property type="entry name" value="Sti35"/>
</dbReference>
<dbReference type="InterPro" id="IPR002922">
    <property type="entry name" value="Thi4_fam"/>
</dbReference>
<dbReference type="NCBIfam" id="TIGR00292">
    <property type="entry name" value="sulfide-dependent adenosine diphosphate thiazole synthase"/>
    <property type="match status" value="1"/>
</dbReference>
<dbReference type="PANTHER" id="PTHR43422">
    <property type="entry name" value="THIAMINE THIAZOLE SYNTHASE"/>
    <property type="match status" value="1"/>
</dbReference>
<dbReference type="PANTHER" id="PTHR43422:SF9">
    <property type="entry name" value="THIAMINE THIAZOLE SYNTHASE 2, CHLOROPLASTIC"/>
    <property type="match status" value="1"/>
</dbReference>
<dbReference type="Pfam" id="PF01946">
    <property type="entry name" value="Thi4"/>
    <property type="match status" value="1"/>
</dbReference>
<dbReference type="SUPFAM" id="SSF51905">
    <property type="entry name" value="FAD/NAD(P)-binding domain"/>
    <property type="match status" value="1"/>
</dbReference>
<comment type="function">
    <text evidence="1 3">Involved in biosynthesis of the thiamine precursor thiazole. Catalyzes the conversion of NAD and glycine to adenosine diphosphate 5-(2-hydroxyethyl)-4-methylthiazole-2-carboxylic acid (ADT), an adenylated thiazole intermediate. The reaction includes an iron-dependent sulfide transfer from a conserved cysteine residue of the protein to a thiazole intermediate. The enzyme can only undergo a single turnover, which suggests it is a suicide enzyme. May have additional roles in adaptation to various stress conditions and in DNA damage tolerance.</text>
</comment>
<comment type="catalytic activity">
    <reaction evidence="1">
        <text>[ADP-thiazole synthase]-L-cysteine + glycine + NAD(+) = [ADP-thiazole synthase]-dehydroalanine + ADP-5-ethyl-4-methylthiazole-2-carboxylate + nicotinamide + 3 H2O + 2 H(+)</text>
        <dbReference type="Rhea" id="RHEA:55708"/>
        <dbReference type="Rhea" id="RHEA-COMP:14264"/>
        <dbReference type="Rhea" id="RHEA-COMP:14265"/>
        <dbReference type="ChEBI" id="CHEBI:15377"/>
        <dbReference type="ChEBI" id="CHEBI:15378"/>
        <dbReference type="ChEBI" id="CHEBI:17154"/>
        <dbReference type="ChEBI" id="CHEBI:29950"/>
        <dbReference type="ChEBI" id="CHEBI:57305"/>
        <dbReference type="ChEBI" id="CHEBI:57540"/>
        <dbReference type="ChEBI" id="CHEBI:90873"/>
        <dbReference type="ChEBI" id="CHEBI:139151"/>
        <dbReference type="EC" id="2.4.2.60"/>
    </reaction>
</comment>
<comment type="cofactor">
    <cofactor evidence="1">
        <name>Fe cation</name>
        <dbReference type="ChEBI" id="CHEBI:24875"/>
    </cofactor>
    <text evidence="1">Binds 1 Fe cation per subunit.</text>
</comment>
<comment type="subunit">
    <text evidence="1">Homooctamer.</text>
</comment>
<comment type="subcellular location">
    <subcellularLocation>
        <location evidence="1 3">Plastid</location>
        <location evidence="1 3">Chloroplast</location>
    </subcellularLocation>
</comment>
<comment type="tissue specificity">
    <text>Highest expression in developing embryos and green leaves and a very low level expression seen in endosperm, roots, etiolated shoots and immature ears.</text>
</comment>
<comment type="developmental stage">
    <text>During embryo development, expression increases from 15-21 days after pollination and decreases slightly at day 24 and this level is maintained until day 36.</text>
</comment>
<comment type="PTM">
    <text evidence="1">During the catalytic reaction, a sulfide is transferred from Cys-219 to a reaction intermediate, generating a dehydroalanine residue.</text>
</comment>
<comment type="similarity">
    <text evidence="1">Belongs to the THI4 family.</text>
</comment>
<gene>
    <name evidence="1" type="primary">THI1-2</name>
</gene>